<protein>
    <recommendedName>
        <fullName>Msx2-interacting protein</fullName>
    </recommendedName>
    <alternativeName>
        <fullName>SMART/HDAC1-associated repressor protein</fullName>
    </alternativeName>
    <alternativeName>
        <fullName>SPEN homolog</fullName>
    </alternativeName>
</protein>
<name>MINT_MOUSE</name>
<evidence type="ECO:0000250" key="1"/>
<evidence type="ECO:0000250" key="2">
    <source>
        <dbReference type="UniProtKB" id="Q96T58"/>
    </source>
</evidence>
<evidence type="ECO:0000255" key="3"/>
<evidence type="ECO:0000255" key="4">
    <source>
        <dbReference type="PROSITE-ProRule" id="PRU00176"/>
    </source>
</evidence>
<evidence type="ECO:0000255" key="5">
    <source>
        <dbReference type="PROSITE-ProRule" id="PRU00249"/>
    </source>
</evidence>
<evidence type="ECO:0000256" key="6">
    <source>
        <dbReference type="SAM" id="MobiDB-lite"/>
    </source>
</evidence>
<evidence type="ECO:0000269" key="7">
    <source>
    </source>
</evidence>
<evidence type="ECO:0000269" key="8">
    <source>
    </source>
</evidence>
<evidence type="ECO:0000269" key="9">
    <source>
    </source>
</evidence>
<evidence type="ECO:0000269" key="10">
    <source>
    </source>
</evidence>
<evidence type="ECO:0000269" key="11">
    <source>
    </source>
</evidence>
<evidence type="ECO:0000269" key="12">
    <source>
    </source>
</evidence>
<evidence type="ECO:0000269" key="13">
    <source ref="3"/>
</evidence>
<evidence type="ECO:0000303" key="14">
    <source>
    </source>
</evidence>
<evidence type="ECO:0000303" key="15">
    <source ref="3"/>
</evidence>
<evidence type="ECO:0000305" key="16"/>
<evidence type="ECO:0007744" key="17">
    <source>
    </source>
</evidence>
<evidence type="ECO:0007744" key="18">
    <source>
    </source>
</evidence>
<accession>Q62504</accession>
<accession>Q80TN9</accession>
<accession>Q99PS4</accession>
<accession>Q9QZW2</accession>
<reference key="1">
    <citation type="journal article" date="2005" name="Science">
        <title>The transcriptional landscape of the mammalian genome.</title>
        <authorList>
            <person name="Carninci P."/>
            <person name="Kasukawa T."/>
            <person name="Katayama S."/>
            <person name="Gough J."/>
            <person name="Frith M.C."/>
            <person name="Maeda N."/>
            <person name="Oyama R."/>
            <person name="Ravasi T."/>
            <person name="Lenhard B."/>
            <person name="Wells C."/>
            <person name="Kodzius R."/>
            <person name="Shimokawa K."/>
            <person name="Bajic V.B."/>
            <person name="Brenner S.E."/>
            <person name="Batalov S."/>
            <person name="Forrest A.R."/>
            <person name="Zavolan M."/>
            <person name="Davis M.J."/>
            <person name="Wilming L.G."/>
            <person name="Aidinis V."/>
            <person name="Allen J.E."/>
            <person name="Ambesi-Impiombato A."/>
            <person name="Apweiler R."/>
            <person name="Aturaliya R.N."/>
            <person name="Bailey T.L."/>
            <person name="Bansal M."/>
            <person name="Baxter L."/>
            <person name="Beisel K.W."/>
            <person name="Bersano T."/>
            <person name="Bono H."/>
            <person name="Chalk A.M."/>
            <person name="Chiu K.P."/>
            <person name="Choudhary V."/>
            <person name="Christoffels A."/>
            <person name="Clutterbuck D.R."/>
            <person name="Crowe M.L."/>
            <person name="Dalla E."/>
            <person name="Dalrymple B.P."/>
            <person name="de Bono B."/>
            <person name="Della Gatta G."/>
            <person name="di Bernardo D."/>
            <person name="Down T."/>
            <person name="Engstrom P."/>
            <person name="Fagiolini M."/>
            <person name="Faulkner G."/>
            <person name="Fletcher C.F."/>
            <person name="Fukushima T."/>
            <person name="Furuno M."/>
            <person name="Futaki S."/>
            <person name="Gariboldi M."/>
            <person name="Georgii-Hemming P."/>
            <person name="Gingeras T.R."/>
            <person name="Gojobori T."/>
            <person name="Green R.E."/>
            <person name="Gustincich S."/>
            <person name="Harbers M."/>
            <person name="Hayashi Y."/>
            <person name="Hensch T.K."/>
            <person name="Hirokawa N."/>
            <person name="Hill D."/>
            <person name="Huminiecki L."/>
            <person name="Iacono M."/>
            <person name="Ikeo K."/>
            <person name="Iwama A."/>
            <person name="Ishikawa T."/>
            <person name="Jakt M."/>
            <person name="Kanapin A."/>
            <person name="Katoh M."/>
            <person name="Kawasawa Y."/>
            <person name="Kelso J."/>
            <person name="Kitamura H."/>
            <person name="Kitano H."/>
            <person name="Kollias G."/>
            <person name="Krishnan S.P."/>
            <person name="Kruger A."/>
            <person name="Kummerfeld S.K."/>
            <person name="Kurochkin I.V."/>
            <person name="Lareau L.F."/>
            <person name="Lazarevic D."/>
            <person name="Lipovich L."/>
            <person name="Liu J."/>
            <person name="Liuni S."/>
            <person name="McWilliam S."/>
            <person name="Madan Babu M."/>
            <person name="Madera M."/>
            <person name="Marchionni L."/>
            <person name="Matsuda H."/>
            <person name="Matsuzawa S."/>
            <person name="Miki H."/>
            <person name="Mignone F."/>
            <person name="Miyake S."/>
            <person name="Morris K."/>
            <person name="Mottagui-Tabar S."/>
            <person name="Mulder N."/>
            <person name="Nakano N."/>
            <person name="Nakauchi H."/>
            <person name="Ng P."/>
            <person name="Nilsson R."/>
            <person name="Nishiguchi S."/>
            <person name="Nishikawa S."/>
            <person name="Nori F."/>
            <person name="Ohara O."/>
            <person name="Okazaki Y."/>
            <person name="Orlando V."/>
            <person name="Pang K.C."/>
            <person name="Pavan W.J."/>
            <person name="Pavesi G."/>
            <person name="Pesole G."/>
            <person name="Petrovsky N."/>
            <person name="Piazza S."/>
            <person name="Reed J."/>
            <person name="Reid J.F."/>
            <person name="Ring B.Z."/>
            <person name="Ringwald M."/>
            <person name="Rost B."/>
            <person name="Ruan Y."/>
            <person name="Salzberg S.L."/>
            <person name="Sandelin A."/>
            <person name="Schneider C."/>
            <person name="Schoenbach C."/>
            <person name="Sekiguchi K."/>
            <person name="Semple C.A."/>
            <person name="Seno S."/>
            <person name="Sessa L."/>
            <person name="Sheng Y."/>
            <person name="Shibata Y."/>
            <person name="Shimada H."/>
            <person name="Shimada K."/>
            <person name="Silva D."/>
            <person name="Sinclair B."/>
            <person name="Sperling S."/>
            <person name="Stupka E."/>
            <person name="Sugiura K."/>
            <person name="Sultana R."/>
            <person name="Takenaka Y."/>
            <person name="Taki K."/>
            <person name="Tammoja K."/>
            <person name="Tan S.L."/>
            <person name="Tang S."/>
            <person name="Taylor M.S."/>
            <person name="Tegner J."/>
            <person name="Teichmann S.A."/>
            <person name="Ueda H.R."/>
            <person name="van Nimwegen E."/>
            <person name="Verardo R."/>
            <person name="Wei C.L."/>
            <person name="Yagi K."/>
            <person name="Yamanishi H."/>
            <person name="Zabarovsky E."/>
            <person name="Zhu S."/>
            <person name="Zimmer A."/>
            <person name="Hide W."/>
            <person name="Bult C."/>
            <person name="Grimmond S.M."/>
            <person name="Teasdale R.D."/>
            <person name="Liu E.T."/>
            <person name="Brusic V."/>
            <person name="Quackenbush J."/>
            <person name="Wahlestedt C."/>
            <person name="Mattick J.S."/>
            <person name="Hume D.A."/>
            <person name="Kai C."/>
            <person name="Sasaki D."/>
            <person name="Tomaru Y."/>
            <person name="Fukuda S."/>
            <person name="Kanamori-Katayama M."/>
            <person name="Suzuki M."/>
            <person name="Aoki J."/>
            <person name="Arakawa T."/>
            <person name="Iida J."/>
            <person name="Imamura K."/>
            <person name="Itoh M."/>
            <person name="Kato T."/>
            <person name="Kawaji H."/>
            <person name="Kawagashira N."/>
            <person name="Kawashima T."/>
            <person name="Kojima M."/>
            <person name="Kondo S."/>
            <person name="Konno H."/>
            <person name="Nakano K."/>
            <person name="Ninomiya N."/>
            <person name="Nishio T."/>
            <person name="Okada M."/>
            <person name="Plessy C."/>
            <person name="Shibata K."/>
            <person name="Shiraki T."/>
            <person name="Suzuki S."/>
            <person name="Tagami M."/>
            <person name="Waki K."/>
            <person name="Watahiki A."/>
            <person name="Okamura-Oho Y."/>
            <person name="Suzuki H."/>
            <person name="Kawai J."/>
            <person name="Hayashizaki Y."/>
        </authorList>
    </citation>
    <scope>NUCLEOTIDE SEQUENCE [LARGE SCALE MRNA] OF 1-112</scope>
    <source>
        <strain>C57BL/6J</strain>
        <tissue>Egg</tissue>
    </source>
</reference>
<reference key="2">
    <citation type="journal article" date="1999" name="Biochemistry">
        <title>The RRM domain of MINT, a novel msx2 binding protein, recognizes and regulates the rat osteocalcin promoter.</title>
        <authorList>
            <person name="Newberry E.P."/>
            <person name="Latifi T."/>
            <person name="Towler D.A."/>
        </authorList>
    </citation>
    <scope>NUCLEOTIDE SEQUENCE [MRNA] OF 49-3644 (ISOFORM 1)</scope>
    <scope>FUNCTION</scope>
    <scope>SUBCELLULAR LOCATION</scope>
    <scope>TISSUE SPECIFICITY</scope>
    <scope>DNA-BINDING</scope>
    <scope>INTERACTION WITH MSX2</scope>
    <source>
        <tissue>Testis</tissue>
    </source>
</reference>
<reference key="3">
    <citation type="submission" date="2001-02" db="EMBL/GenBank/DDBJ databases">
        <title>MINT/spen negatively regulates Notch signaling by inhibiting RBP-J/Su(H) activity.</title>
        <authorList>
            <person name="Sakamoto T."/>
            <person name="Gotou T."/>
            <person name="Isagawa Y."/>
            <person name="Mimura H."/>
            <person name="Kimura K."/>
            <person name="Kawaichi M."/>
        </authorList>
    </citation>
    <scope>NUCLEOTIDE SEQUENCE [MRNA] OF 69-3644 (ISOFORM 2)</scope>
    <scope>VARIANTS THR-348; PHE-762; PHE-773 AND LEU-933</scope>
    <source>
        <strain>ICR</strain>
        <tissue>Brain</tissue>
    </source>
</reference>
<reference key="4">
    <citation type="journal article" date="1997" name="Genomics">
        <title>Cloning of the genes encoding two murine and human cochlear unconventional type I myosins.</title>
        <authorList>
            <person name="Crozet F."/>
            <person name="El-Amraoui A."/>
            <person name="Blanchard S."/>
            <person name="Lenoir M."/>
            <person name="Ripoll C."/>
            <person name="Vago P."/>
            <person name="Hamel C."/>
            <person name="Fizames C."/>
            <person name="Levi-Acobas F."/>
            <person name="Depetris D."/>
            <person name="Mattei M.-G."/>
            <person name="Weil D."/>
            <person name="Pujol R."/>
            <person name="Petit C."/>
        </authorList>
    </citation>
    <scope>NUCLEOTIDE SEQUENCE [MRNA] OF 318-578</scope>
    <scope>VARIANT THR-348</scope>
    <source>
        <tissue>Cochlea</tissue>
    </source>
</reference>
<reference key="5">
    <citation type="journal article" date="2003" name="DNA Res.">
        <title>Prediction of the coding sequences of mouse homologues of KIAA gene: II. The complete nucleotide sequences of 400 mouse KIAA-homologous cDNAs identified by screening of terminal sequences of cDNA clones randomly sampled from size-fractionated libraries.</title>
        <authorList>
            <person name="Okazaki N."/>
            <person name="Kikuno R."/>
            <person name="Ohara R."/>
            <person name="Inamoto S."/>
            <person name="Aizawa H."/>
            <person name="Yuasa S."/>
            <person name="Nakajima D."/>
            <person name="Nagase T."/>
            <person name="Ohara O."/>
            <person name="Koga H."/>
        </authorList>
    </citation>
    <scope>NUCLEOTIDE SEQUENCE [LARGE SCALE MRNA] OF 2600-3644 (ISOFORM 3)</scope>
    <source>
        <tissue>Brain</tissue>
    </source>
</reference>
<reference key="6">
    <citation type="submission" date="2003-12" db="EMBL/GenBank/DDBJ databases">
        <authorList>
            <person name="Okazaki N."/>
            <person name="Kikuno R."/>
            <person name="Nagase T."/>
            <person name="Ohara O."/>
            <person name="Koga H."/>
        </authorList>
    </citation>
    <scope>SEQUENCE REVISION</scope>
</reference>
<reference key="7">
    <citation type="journal article" date="2002" name="EMBO J.">
        <title>SHARP is a novel component of the Notch/RBP-Jkappa signalling pathway.</title>
        <authorList>
            <person name="Oswald F."/>
            <person name="Kostezka U."/>
            <person name="Astrahantseff K."/>
            <person name="Bourteele S."/>
            <person name="Dillinger K."/>
            <person name="Zechner U."/>
            <person name="Ludwig L."/>
            <person name="Wilda M."/>
            <person name="Hameister H."/>
            <person name="Knoechel W."/>
            <person name="Liptay S."/>
            <person name="Schmid R.M."/>
        </authorList>
    </citation>
    <scope>TISSUE SPECIFICITY</scope>
</reference>
<reference key="8">
    <citation type="journal article" date="2003" name="Immunity">
        <title>Regulation of marginal zone B cell development by MINT, a suppressor of Notch/RBP-J signaling pathway.</title>
        <authorList>
            <person name="Kuroda K."/>
            <person name="Han H."/>
            <person name="Tani S."/>
            <person name="Tanigaki K."/>
            <person name="Tun T."/>
            <person name="Furukawa T."/>
            <person name="Taniguchi Y."/>
            <person name="Kurooka H."/>
            <person name="Hamada Y."/>
            <person name="Toyokuni S."/>
            <person name="Honjo T."/>
        </authorList>
    </citation>
    <scope>FUNCTION</scope>
    <scope>TISSUE SPECIFICITY</scope>
</reference>
<reference key="9">
    <citation type="journal article" date="2004" name="J. Biol. Chem.">
        <title>MINT, the Msx2 interacting nuclear matrix target, enhances Runx2-dependent activation of the osteocalcin fibroblast growth factor response element.</title>
        <authorList>
            <person name="Sierra O.L."/>
            <person name="Cheng S.L."/>
            <person name="Loewy A.P."/>
            <person name="Charlton-Kachigian N."/>
            <person name="Towler D.A."/>
        </authorList>
    </citation>
    <scope>FUNCTION</scope>
    <scope>SUBCELLULAR LOCATION</scope>
</reference>
<reference key="10">
    <citation type="journal article" date="2007" name="Proc. Natl. Acad. Sci. U.S.A.">
        <title>Large-scale phosphorylation analysis of mouse liver.</title>
        <authorList>
            <person name="Villen J."/>
            <person name="Beausoleil S.A."/>
            <person name="Gerber S.A."/>
            <person name="Gygi S.P."/>
        </authorList>
    </citation>
    <scope>PHOSPHORYLATION [LARGE SCALE ANALYSIS] AT SER-1395</scope>
    <scope>IDENTIFICATION BY MASS SPECTROMETRY [LARGE SCALE ANALYSIS]</scope>
    <source>
        <tissue>Liver</tissue>
    </source>
</reference>
<reference key="11">
    <citation type="journal article" date="2010" name="Cell">
        <title>A tissue-specific atlas of mouse protein phosphorylation and expression.</title>
        <authorList>
            <person name="Huttlin E.L."/>
            <person name="Jedrychowski M.P."/>
            <person name="Elias J.E."/>
            <person name="Goswami T."/>
            <person name="Rad R."/>
            <person name="Beausoleil S.A."/>
            <person name="Villen J."/>
            <person name="Haas W."/>
            <person name="Sowa M.E."/>
            <person name="Gygi S.P."/>
        </authorList>
    </citation>
    <scope>PHOSPHORYLATION [LARGE SCALE ANALYSIS] AT SER-852; SER-855; SER-869 AND SER-1395</scope>
    <scope>IDENTIFICATION BY MASS SPECTROMETRY [LARGE SCALE ANALYSIS]</scope>
    <source>
        <tissue>Kidney</tissue>
        <tissue>Spleen</tissue>
        <tissue>Testis</tissue>
    </source>
</reference>
<reference key="12">
    <citation type="journal article" date="2010" name="Mol. Endocrinol.">
        <title>Runx2 trans-activation mediated by the MSX2-interacting nuclear target requires homeodomain interacting protein kinase-3.</title>
        <authorList>
            <person name="Sierra O.L."/>
            <person name="Towler D.A."/>
        </authorList>
    </citation>
    <scope>FUNCTION</scope>
    <scope>INTERACTION WITH HIPK3</scope>
</reference>
<feature type="chain" id="PRO_0000081628" description="Msx2-interacting protein">
    <location>
        <begin position="1"/>
        <end position="3644"/>
    </location>
</feature>
<feature type="domain" description="RRM 1" evidence="4">
    <location>
        <begin position="6"/>
        <end position="81"/>
    </location>
</feature>
<feature type="domain" description="RRM 2" evidence="4">
    <location>
        <begin position="336"/>
        <end position="416"/>
    </location>
</feature>
<feature type="domain" description="RRM 3" evidence="4">
    <location>
        <begin position="439"/>
        <end position="514"/>
    </location>
</feature>
<feature type="domain" description="RRM 4" evidence="4">
    <location>
        <begin position="518"/>
        <end position="590"/>
    </location>
</feature>
<feature type="domain" description="RID">
    <location>
        <begin position="2216"/>
        <end position="2704"/>
    </location>
</feature>
<feature type="domain" description="SPOC" evidence="5">
    <location>
        <begin position="3478"/>
        <end position="3644"/>
    </location>
</feature>
<feature type="DNA-binding region">
    <location>
        <begin position="1"/>
        <end position="574"/>
    </location>
</feature>
<feature type="region of interest" description="Disordered" evidence="6">
    <location>
        <begin position="103"/>
        <end position="124"/>
    </location>
</feature>
<feature type="region of interest" description="Disordered" evidence="6">
    <location>
        <begin position="170"/>
        <end position="209"/>
    </location>
</feature>
<feature type="region of interest" description="Disordered" evidence="6">
    <location>
        <begin position="225"/>
        <end position="331"/>
    </location>
</feature>
<feature type="region of interest" description="Disordered" evidence="6">
    <location>
        <begin position="625"/>
        <end position="673"/>
    </location>
</feature>
<feature type="region of interest" description="Disordered" evidence="6">
    <location>
        <begin position="716"/>
        <end position="1413"/>
    </location>
</feature>
<feature type="region of interest" description="Disordered" evidence="6">
    <location>
        <begin position="1494"/>
        <end position="1538"/>
    </location>
</feature>
<feature type="region of interest" description="Disordered" evidence="6">
    <location>
        <begin position="1557"/>
        <end position="2447"/>
    </location>
</feature>
<feature type="region of interest" description="Interaction with MSX2" evidence="7">
    <location>
        <begin position="2138"/>
        <end position="2462"/>
    </location>
</feature>
<feature type="region of interest" description="Disordered" evidence="6">
    <location>
        <begin position="2453"/>
        <end position="2472"/>
    </location>
</feature>
<feature type="region of interest" description="Disordered" evidence="6">
    <location>
        <begin position="2481"/>
        <end position="2528"/>
    </location>
</feature>
<feature type="region of interest" description="Interaction with RBPSUH">
    <location>
        <begin position="2706"/>
        <end position="2845"/>
    </location>
</feature>
<feature type="region of interest" description="Disordered" evidence="6">
    <location>
        <begin position="2745"/>
        <end position="2781"/>
    </location>
</feature>
<feature type="region of interest" description="Disordered" evidence="6">
    <location>
        <begin position="2829"/>
        <end position="2849"/>
    </location>
</feature>
<feature type="region of interest" description="Disordered" evidence="6">
    <location>
        <begin position="2974"/>
        <end position="3023"/>
    </location>
</feature>
<feature type="region of interest" description="Disordered" evidence="6">
    <location>
        <begin position="3310"/>
        <end position="3473"/>
    </location>
</feature>
<feature type="coiled-coil region" evidence="3">
    <location>
        <begin position="559"/>
        <end position="575"/>
    </location>
</feature>
<feature type="coiled-coil region" evidence="3">
    <location>
        <begin position="822"/>
        <end position="850"/>
    </location>
</feature>
<feature type="coiled-coil region" evidence="3">
    <location>
        <begin position="1185"/>
        <end position="1206"/>
    </location>
</feature>
<feature type="coiled-coil region" evidence="3">
    <location>
        <begin position="1509"/>
        <end position="1544"/>
    </location>
</feature>
<feature type="coiled-coil region" evidence="3">
    <location>
        <begin position="1607"/>
        <end position="1627"/>
    </location>
</feature>
<feature type="compositionally biased region" description="Basic and acidic residues" evidence="6">
    <location>
        <begin position="192"/>
        <end position="207"/>
    </location>
</feature>
<feature type="compositionally biased region" description="Basic and acidic residues" evidence="6">
    <location>
        <begin position="225"/>
        <end position="237"/>
    </location>
</feature>
<feature type="compositionally biased region" description="Low complexity" evidence="6">
    <location>
        <begin position="245"/>
        <end position="310"/>
    </location>
</feature>
<feature type="compositionally biased region" description="Basic and acidic residues" evidence="6">
    <location>
        <begin position="639"/>
        <end position="656"/>
    </location>
</feature>
<feature type="compositionally biased region" description="Basic and acidic residues" evidence="6">
    <location>
        <begin position="716"/>
        <end position="745"/>
    </location>
</feature>
<feature type="compositionally biased region" description="Basic and acidic residues" evidence="6">
    <location>
        <begin position="765"/>
        <end position="783"/>
    </location>
</feature>
<feature type="compositionally biased region" description="Low complexity" evidence="6">
    <location>
        <begin position="784"/>
        <end position="794"/>
    </location>
</feature>
<feature type="compositionally biased region" description="Basic and acidic residues" evidence="6">
    <location>
        <begin position="795"/>
        <end position="842"/>
    </location>
</feature>
<feature type="compositionally biased region" description="Basic and acidic residues" evidence="6">
    <location>
        <begin position="863"/>
        <end position="894"/>
    </location>
</feature>
<feature type="compositionally biased region" description="Basic and acidic residues" evidence="6">
    <location>
        <begin position="904"/>
        <end position="930"/>
    </location>
</feature>
<feature type="compositionally biased region" description="Basic and acidic residues" evidence="6">
    <location>
        <begin position="947"/>
        <end position="975"/>
    </location>
</feature>
<feature type="compositionally biased region" description="Basic and acidic residues" evidence="6">
    <location>
        <begin position="1009"/>
        <end position="1071"/>
    </location>
</feature>
<feature type="compositionally biased region" description="Basic and acidic residues" evidence="6">
    <location>
        <begin position="1138"/>
        <end position="1227"/>
    </location>
</feature>
<feature type="compositionally biased region" description="Basic and acidic residues" evidence="6">
    <location>
        <begin position="1246"/>
        <end position="1272"/>
    </location>
</feature>
<feature type="compositionally biased region" description="Basic and acidic residues" evidence="6">
    <location>
        <begin position="1283"/>
        <end position="1292"/>
    </location>
</feature>
<feature type="compositionally biased region" description="Basic and acidic residues" evidence="6">
    <location>
        <begin position="1351"/>
        <end position="1365"/>
    </location>
</feature>
<feature type="compositionally biased region" description="Basic and acidic residues" evidence="6">
    <location>
        <begin position="1516"/>
        <end position="1538"/>
    </location>
</feature>
<feature type="compositionally biased region" description="Basic and acidic residues" evidence="6">
    <location>
        <begin position="1557"/>
        <end position="1567"/>
    </location>
</feature>
<feature type="compositionally biased region" description="Polar residues" evidence="6">
    <location>
        <begin position="1582"/>
        <end position="1591"/>
    </location>
</feature>
<feature type="compositionally biased region" description="Basic and acidic residues" evidence="6">
    <location>
        <begin position="1601"/>
        <end position="1646"/>
    </location>
</feature>
<feature type="compositionally biased region" description="Low complexity" evidence="6">
    <location>
        <begin position="1701"/>
        <end position="1710"/>
    </location>
</feature>
<feature type="compositionally biased region" description="Polar residues" evidence="6">
    <location>
        <begin position="1756"/>
        <end position="1765"/>
    </location>
</feature>
<feature type="compositionally biased region" description="Basic and acidic residues" evidence="6">
    <location>
        <begin position="1782"/>
        <end position="1796"/>
    </location>
</feature>
<feature type="compositionally biased region" description="Polar residues" evidence="6">
    <location>
        <begin position="1797"/>
        <end position="1810"/>
    </location>
</feature>
<feature type="compositionally biased region" description="Basic and acidic residues" evidence="6">
    <location>
        <begin position="1857"/>
        <end position="1871"/>
    </location>
</feature>
<feature type="compositionally biased region" description="Basic and acidic residues" evidence="6">
    <location>
        <begin position="1879"/>
        <end position="1894"/>
    </location>
</feature>
<feature type="compositionally biased region" description="Basic and acidic residues" evidence="6">
    <location>
        <begin position="1930"/>
        <end position="1943"/>
    </location>
</feature>
<feature type="compositionally biased region" description="Basic residues" evidence="6">
    <location>
        <begin position="1967"/>
        <end position="1976"/>
    </location>
</feature>
<feature type="compositionally biased region" description="Basic and acidic residues" evidence="6">
    <location>
        <begin position="1977"/>
        <end position="1991"/>
    </location>
</feature>
<feature type="compositionally biased region" description="Basic and acidic residues" evidence="6">
    <location>
        <begin position="2039"/>
        <end position="2066"/>
    </location>
</feature>
<feature type="compositionally biased region" description="Basic and acidic residues" evidence="6">
    <location>
        <begin position="2074"/>
        <end position="2084"/>
    </location>
</feature>
<feature type="compositionally biased region" description="Basic and acidic residues" evidence="6">
    <location>
        <begin position="2097"/>
        <end position="2106"/>
    </location>
</feature>
<feature type="compositionally biased region" description="Polar residues" evidence="6">
    <location>
        <begin position="2129"/>
        <end position="2147"/>
    </location>
</feature>
<feature type="compositionally biased region" description="Low complexity" evidence="6">
    <location>
        <begin position="2191"/>
        <end position="2212"/>
    </location>
</feature>
<feature type="compositionally biased region" description="Low complexity" evidence="6">
    <location>
        <begin position="2231"/>
        <end position="2242"/>
    </location>
</feature>
<feature type="compositionally biased region" description="Basic and acidic residues" evidence="6">
    <location>
        <begin position="2261"/>
        <end position="2274"/>
    </location>
</feature>
<feature type="compositionally biased region" description="Polar residues" evidence="6">
    <location>
        <begin position="2281"/>
        <end position="2290"/>
    </location>
</feature>
<feature type="compositionally biased region" description="Basic and acidic residues" evidence="6">
    <location>
        <begin position="2318"/>
        <end position="2329"/>
    </location>
</feature>
<feature type="compositionally biased region" description="Basic residues" evidence="6">
    <location>
        <begin position="2330"/>
        <end position="2345"/>
    </location>
</feature>
<feature type="compositionally biased region" description="Low complexity" evidence="6">
    <location>
        <begin position="2359"/>
        <end position="2379"/>
    </location>
</feature>
<feature type="compositionally biased region" description="Pro residues" evidence="6">
    <location>
        <begin position="3003"/>
        <end position="3015"/>
    </location>
</feature>
<feature type="compositionally biased region" description="Low complexity" evidence="6">
    <location>
        <begin position="3323"/>
        <end position="3340"/>
    </location>
</feature>
<feature type="compositionally biased region" description="Polar residues" evidence="6">
    <location>
        <begin position="3366"/>
        <end position="3379"/>
    </location>
</feature>
<feature type="modified residue" description="Phosphoserine" evidence="2">
    <location>
        <position position="99"/>
    </location>
</feature>
<feature type="modified residue" description="Omega-N-methylarginine" evidence="2">
    <location>
        <position position="108"/>
    </location>
</feature>
<feature type="modified residue" description="Phosphoserine" evidence="2">
    <location>
        <position position="188"/>
    </location>
</feature>
<feature type="modified residue" description="Phosphoserine" evidence="2">
    <location>
        <position position="190"/>
    </location>
</feature>
<feature type="modified residue" description="Phosphoserine" evidence="2">
    <location>
        <position position="310"/>
    </location>
</feature>
<feature type="modified residue" description="Phosphoserine" evidence="2">
    <location>
        <position position="647"/>
    </location>
</feature>
<feature type="modified residue" description="Phosphoserine" evidence="2">
    <location>
        <position position="747"/>
    </location>
</feature>
<feature type="modified residue" description="Phosphoserine" evidence="2">
    <location>
        <position position="749"/>
    </location>
</feature>
<feature type="modified residue" description="Phosphoserine" evidence="2">
    <location>
        <position position="758"/>
    </location>
</feature>
<feature type="modified residue" description="Phosphoserine" evidence="2">
    <location>
        <position position="762"/>
    </location>
</feature>
<feature type="modified residue" description="Phosphoserine" evidence="2">
    <location>
        <position position="792"/>
    </location>
</feature>
<feature type="modified residue" description="Phosphoserine" evidence="18">
    <location>
        <position position="852"/>
    </location>
</feature>
<feature type="modified residue" description="Phosphoserine" evidence="18">
    <location>
        <position position="855"/>
    </location>
</feature>
<feature type="modified residue" description="Phosphoserine" evidence="18">
    <location>
        <position position="869"/>
    </location>
</feature>
<feature type="modified residue" description="Phosphoserine" evidence="2">
    <location>
        <position position="1077"/>
    </location>
</feature>
<feature type="modified residue" description="Phosphoserine" evidence="2">
    <location>
        <position position="1183"/>
    </location>
</feature>
<feature type="modified residue" description="Phosphoserine" evidence="2">
    <location>
        <position position="1209"/>
    </location>
</feature>
<feature type="modified residue" description="Phosphoserine" evidence="2">
    <location>
        <position position="1237"/>
    </location>
</feature>
<feature type="modified residue" description="Phosphoserine" evidence="2">
    <location>
        <position position="1267"/>
    </location>
</feature>
<feature type="modified residue" description="Phosphoserine" evidence="2">
    <location>
        <position position="1276"/>
    </location>
</feature>
<feature type="modified residue" description="Phosphoserine" evidence="2">
    <location>
        <position position="1283"/>
    </location>
</feature>
<feature type="modified residue" description="Phosphoserine" evidence="2">
    <location>
        <position position="1293"/>
    </location>
</feature>
<feature type="modified residue" description="Phosphoserine" evidence="2">
    <location>
        <position position="1298"/>
    </location>
</feature>
<feature type="modified residue" description="Phosphoserine" evidence="2">
    <location>
        <position position="1302"/>
    </location>
</feature>
<feature type="modified residue" description="Phosphoserine" evidence="2">
    <location>
        <position position="1348"/>
    </location>
</feature>
<feature type="modified residue" description="Phosphoserine" evidence="17 18">
    <location>
        <position position="1395"/>
    </location>
</feature>
<feature type="modified residue" description="Phosphoserine" evidence="2">
    <location>
        <position position="1397"/>
    </location>
</feature>
<feature type="modified residue" description="Phosphothreonine" evidence="2">
    <location>
        <position position="1454"/>
    </location>
</feature>
<feature type="modified residue" description="Phosphothreonine" evidence="2">
    <location>
        <position position="1456"/>
    </location>
</feature>
<feature type="modified residue" description="Phosphothreonine" evidence="2">
    <location>
        <position position="1634"/>
    </location>
</feature>
<feature type="modified residue" description="Phosphothreonine" evidence="2">
    <location>
        <position position="1844"/>
    </location>
</feature>
<feature type="modified residue" description="Phosphoserine" evidence="2">
    <location>
        <position position="1915"/>
    </location>
</feature>
<feature type="modified residue" description="Phosphoserine" evidence="2">
    <location>
        <position position="1936"/>
    </location>
</feature>
<feature type="modified residue" description="Phosphothreonine" evidence="2">
    <location>
        <position position="1965"/>
    </location>
</feature>
<feature type="modified residue" description="Phosphoserine" evidence="2">
    <location>
        <position position="2128"/>
    </location>
</feature>
<feature type="modified residue" description="Phosphoserine" evidence="2">
    <location>
        <position position="2134"/>
    </location>
</feature>
<feature type="modified residue" description="Phosphothreonine" evidence="2">
    <location>
        <position position="2171"/>
    </location>
</feature>
<feature type="modified residue" description="Phosphoserine" evidence="2">
    <location>
        <position position="2366"/>
    </location>
</feature>
<feature type="modified residue" description="Phosphothreonine" evidence="2">
    <location>
        <position position="2419"/>
    </location>
</feature>
<feature type="modified residue" description="Phosphoserine" evidence="2">
    <location>
        <position position="2450"/>
    </location>
</feature>
<feature type="modified residue" description="Phosphoserine" evidence="2">
    <location>
        <position position="2454"/>
    </location>
</feature>
<feature type="modified residue" description="Phosphothreonine" evidence="2">
    <location>
        <position position="2458"/>
    </location>
</feature>
<feature type="modified residue" description="Phosphoserine" evidence="2">
    <location>
        <position position="2491"/>
    </location>
</feature>
<feature type="modified residue" description="Phosphothreonine" evidence="2">
    <location>
        <position position="2913"/>
    </location>
</feature>
<feature type="modified residue" description="Phosphothreonine" evidence="2">
    <location>
        <position position="2925"/>
    </location>
</feature>
<feature type="modified residue" description="Asymmetric dimethylarginine" evidence="2">
    <location>
        <position position="3088"/>
    </location>
</feature>
<feature type="modified residue" description="Asymmetric dimethylarginine" evidence="2">
    <location>
        <position position="3096"/>
    </location>
</feature>
<feature type="modified residue" description="Phosphoserine" evidence="2">
    <location>
        <position position="3413"/>
    </location>
</feature>
<feature type="splice variant" id="VSP_008564" description="In isoform 2." evidence="15">
    <location>
        <begin position="618"/>
        <end position="640"/>
    </location>
</feature>
<feature type="splice variant" id="VSP_013802" description="In isoform 3." evidence="14">
    <original>PPEGE</original>
    <variation>RKPAFF</variation>
    <location>
        <begin position="3318"/>
        <end position="3322"/>
    </location>
</feature>
<feature type="splice variant" id="VSP_013803" description="In isoform 3." evidence="14">
    <original>ETD</original>
    <variation>RLE</variation>
    <location>
        <begin position="3550"/>
        <end position="3552"/>
    </location>
</feature>
<feature type="splice variant" id="VSP_013804" description="In isoform 3." evidence="14">
    <location>
        <begin position="3553"/>
        <end position="3644"/>
    </location>
</feature>
<feature type="sequence variant" evidence="12 13">
    <original>I</original>
    <variation>T</variation>
    <location>
        <position position="348"/>
    </location>
</feature>
<feature type="sequence variant" evidence="13">
    <original>S</original>
    <variation>F</variation>
    <location>
        <position position="762"/>
    </location>
</feature>
<feature type="sequence variant" evidence="13">
    <original>S</original>
    <variation>F</variation>
    <location>
        <position position="773"/>
    </location>
</feature>
<feature type="sequence variant" evidence="13">
    <original>S</original>
    <variation>L</variation>
    <location>
        <position position="933"/>
    </location>
</feature>
<feature type="sequence conflict" description="In Ref. 4; CAB01562." evidence="16" ref="4">
    <original>V</original>
    <variation>E</variation>
    <location>
        <position position="366"/>
    </location>
</feature>
<feature type="sequence conflict" description="In Ref. 4; CAB01562." evidence="16" ref="4">
    <original>L</original>
    <variation>B</variation>
    <location>
        <position position="394"/>
    </location>
</feature>
<feature type="sequence conflict" description="In Ref. 4; CAB01562." evidence="16" ref="4">
    <original>V</original>
    <variation>E</variation>
    <location>
        <position position="409"/>
    </location>
</feature>
<feature type="sequence conflict" description="In Ref. 4; CAB01562." evidence="16" ref="4">
    <original>V</original>
    <variation>E</variation>
    <location>
        <position position="413"/>
    </location>
</feature>
<feature type="sequence conflict" description="In Ref. 4; CAB01562." evidence="16" ref="4">
    <original>I</original>
    <variation>K</variation>
    <location>
        <position position="430"/>
    </location>
</feature>
<feature type="sequence conflict" description="In Ref. 4; CAB01562." evidence="16" ref="4">
    <original>DLRNIFQRF</original>
    <variation>EPSETSFSAL</variation>
    <location>
        <begin position="454"/>
        <end position="462"/>
    </location>
</feature>
<feature type="sequence conflict" description="In Ref. 4; CAB01562." evidence="16" ref="4">
    <original>F</original>
    <variation>L</variation>
    <location>
        <position position="511"/>
    </location>
</feature>
<feature type="sequence conflict" description="In Ref. 4; CAB01562." evidence="16" ref="4">
    <original>S</original>
    <variation>P</variation>
    <location>
        <position position="527"/>
    </location>
</feature>
<feature type="sequence conflict" description="In Ref. 4; CAB01562." evidence="16" ref="4">
    <original>H</original>
    <variation>N</variation>
    <location>
        <position position="537"/>
    </location>
</feature>
<feature type="sequence conflict" description="In Ref. 4; CAB01562." evidence="16" ref="4">
    <original>A</original>
    <variation>V</variation>
    <location>
        <position position="566"/>
    </location>
</feature>
<feature type="sequence conflict" description="In Ref. 4; CAB01562." evidence="16" ref="4">
    <original>A</original>
    <variation>V</variation>
    <location>
        <position position="569"/>
    </location>
</feature>
<feature type="sequence conflict" description="In Ref. 4; CAB01562." evidence="16" ref="4">
    <original>TKGRK</original>
    <variation>DQGQE</variation>
    <location>
        <begin position="573"/>
        <end position="577"/>
    </location>
</feature>
<feature type="sequence conflict" description="In Ref. 3; BAB32786." evidence="16" ref="3">
    <original>R</original>
    <variation>G</variation>
    <location>
        <position position="754"/>
    </location>
</feature>
<feature type="sequence conflict" description="In Ref. 3; BAB32786." evidence="16" ref="3">
    <original>D</original>
    <variation>A</variation>
    <location>
        <position position="1524"/>
    </location>
</feature>
<feature type="sequence conflict" description="In Ref. 3; BAB32786." evidence="16" ref="3">
    <original>H</original>
    <variation>Y</variation>
    <location>
        <position position="1560"/>
    </location>
</feature>
<feature type="sequence conflict" description="In Ref. 3; BAB32786." evidence="16" ref="3">
    <original>F</original>
    <variation>L</variation>
    <location>
        <position position="1570"/>
    </location>
</feature>
<feature type="sequence conflict" description="In Ref. 3; BAB32786." evidence="16" ref="3">
    <original>R</original>
    <variation>G</variation>
    <location>
        <position position="1574"/>
    </location>
</feature>
<feature type="sequence conflict" description="In Ref. 3; BAB32786." evidence="16" ref="3">
    <original>Q</original>
    <variation>R</variation>
    <location>
        <position position="1609"/>
    </location>
</feature>
<feature type="sequence conflict" description="In Ref. 3; BAB32786." evidence="16" ref="3">
    <original>I</original>
    <variation>V</variation>
    <location>
        <position position="1659"/>
    </location>
</feature>
<feature type="sequence conflict" description="In Ref. 3; BAB32786." evidence="16" ref="3">
    <original>S</original>
    <variation>F</variation>
    <location>
        <position position="1669"/>
    </location>
</feature>
<feature type="sequence conflict" description="In Ref. 3; BAB32786." evidence="16" ref="3">
    <original>V</original>
    <variation>A</variation>
    <location>
        <position position="1705"/>
    </location>
</feature>
<feature type="sequence conflict" description="In Ref. 3; BAB32786." evidence="16" ref="3">
    <original>A</original>
    <variation>V</variation>
    <location>
        <position position="1815"/>
    </location>
</feature>
<feature type="sequence conflict" description="In Ref. 3; BAB32786." evidence="16" ref="3">
    <original>G</original>
    <variation>A</variation>
    <location>
        <position position="2097"/>
    </location>
</feature>
<feature type="sequence conflict" description="In Ref. 3; BAB32786." evidence="16" ref="3">
    <location>
        <begin position="2201"/>
        <end position="2202"/>
    </location>
</feature>
<feature type="sequence conflict" description="In Ref. 3; BAB32786." evidence="16" ref="3">
    <original>A</original>
    <variation>V</variation>
    <location>
        <position position="2322"/>
    </location>
</feature>
<feature type="sequence conflict" description="In Ref. 3; BAB32786." evidence="16" ref="3">
    <original>P</original>
    <variation>Q</variation>
    <location>
        <position position="2385"/>
    </location>
</feature>
<feature type="sequence conflict" description="In Ref. 3; BAB32786." evidence="16" ref="3">
    <original>R</original>
    <variation>K</variation>
    <location>
        <position position="2502"/>
    </location>
</feature>
<feature type="sequence conflict" description="In Ref. 3; BAB32786." evidence="16" ref="3">
    <original>E</original>
    <variation>K</variation>
    <location>
        <position position="2505"/>
    </location>
</feature>
<feature type="sequence conflict" description="In Ref. 3; BAB32786." evidence="16" ref="3">
    <original>D</original>
    <variation>N</variation>
    <location>
        <position position="2519"/>
    </location>
</feature>
<feature type="sequence conflict" description="In Ref. 3; BAB32786." evidence="16" ref="3">
    <original>T</original>
    <variation>S</variation>
    <location>
        <position position="2554"/>
    </location>
</feature>
<feature type="sequence conflict" description="In Ref. 3; BAB32786." evidence="16" ref="3">
    <original>LVSTPAGPVN</original>
    <variation>VGEHPWWARD</variation>
    <location>
        <begin position="2679"/>
        <end position="2688"/>
    </location>
</feature>
<feature type="sequence conflict" description="In Ref. 3; BAB32786 and 5; BAC65684." evidence="16" ref="3 5">
    <original>L</original>
    <variation>P</variation>
    <location>
        <position position="3010"/>
    </location>
</feature>
<gene>
    <name type="primary">Spen</name>
    <name type="synonym">Kiaa0929</name>
    <name type="synonym">Mint</name>
    <name type="synonym">Sharp</name>
</gene>
<sequence length="3644" mass="398754">MVRETRHLWVGNLPENVREEKIIEHFKRYGRVESVKILPKRGSEGGVAAFVDFVDIKSAQKAHNSVNKMGDRDLRTDYNEPGTIPSAARGLDETVSIASRSREVSGFRGSAGGPAYGPPPSLHAREGRYERRLDGASDNRERAYEHSAYGHHERGTGAFDRTRHYDQDYYRDPRERTLQHGLYYTSRSRSPNRFDAHDPRYEPRAREQFTLPSVVHRDIYRDDITREVRGRRPERSYQHSRSRSPHSSQSRNQSPQRLASQASRPTRSPSGSGSRSRSSSSDSISSSSSSSNTDSSDSSSTASDDSPARSVQSAAVPAPTSQLLSSLEKDEPRKSFGIKVQNLPVRSIDTSLKDGLFHEFKKFGKVTSVQIHGASEERYGLVFFRQQEDQEKALTASKGKLFFGMQIEVTAWVGPETESENEFRPLDERIDEFHPKATRTLFIGNLEKTTTYHDLRNIFQRFGEIVDIDIKKVNGVPQYAFLQYCDIASVCKAIKKMDGEYLGNNRLKLGFGKSMPTNCVWLDGLSSNVSDQYLTRHFCRYGPVVKVVFDRLKGMALVLYSEIEDAQAAVKETKGRKIGGNKIKVDFANRESQLAFYHCMEKSGQDMRDFYEMLTERRAGQMAQSKHEDWSADAQSPHKCREERRGSYEYSQERTYYENVRTPGTYPEDSRRDYPARGREFYSEWETYQGEYYDSRYYDEPREYREYRSDPYEQDIREYSYRQRERERERERFESDRDHERRPIERSQSPVHLRRPQSPGVSPAHSERLPSDSERRLYRRSSERSGSCSSVSPPRYDKLEKARLERYTKNEKADKERTFDPERVERERRIVRKEKGEKDKAERQKRKGKAHSPSSQPSETEQENDREQSPEKPRGSTKLSRDRADKEGPAKNRLELVPCVVLTRVKEKEGKVIEHPPPEKLKARLGRDTTKASALDQKPQAAQGEPAKSDPARGKALREKVLPSHAEVGEKEGRTKLRKHLKAEQTPELSALDLEKLEARKRRFADSGLKIEKQKPEIKKTSPETEDTRILLKKQPDTSRDGVLLREGESERKPVRKEILKRESKKTKLERLNSALSPKDCQDPAAVSAGSGSRPSSDVHAGLGELTHGSVETQETQPKKAIPSKPQPKQLQLLENQGPEKEEVRKNYCRPREEPAEHRAGQEKPHGGNAEEKLGIDIDHTQSYRKQMEQSRRKQRMEMEIAKAEKFGSPKKDVDDYERRSLVHEVGKPPQDVTDDSPPSKKRRTDHVDFDICTKRERNYRSSRQISEDSERTSCSPSVRHGSFHDDDDPRGSPRLVSVKGSPKGDEKGLPYPNAAVRDDPLKCNPYDSGKREQTADTAKIKLSVLNSEGEPSRWDPPMKQDPSRFDVSFPNSVIKRDSLRKRSVRDLEPGEVPSDSDEDAEHRSQSPRASSFYDSPRLSFLLRDRDQKLRERDERLASSLERNKFYSFALDKTITPDTKALLERAKSLSSSREENWSFLDWDSRFANFRNNKDKEKVDSAPRPIPSWYMKKKKIRTDSEGKLDDKKDERREEEQERQELFASRFLHSSIFEQDSKRLQHLERKSEESDFPPGRLYGRQASEGANSTSDSVQEPVVLFHSRFMELTRMQQKEKEKDQKPKEAEKQEEPETHPKTPEPAAETKEPEPKAPVSAGLPAVTITVVTPEPASSAPEKAEEAAEAPSPAGEKPAEPAPVSEETKLVSEPVSVPVEQPRQSDVPPGEDSRDSQDSAALAPSAPQESAATDAVPCVNAEPLTPGTTVSQVESSVDPKPSSPQPLSKLTQRSEEAEEGKVEKPDTTPSTEPDATQNAGVASEAQPPASEDVEANPPVAAKDRKTNKSKRSKTSVQAAAASVVEKPVTRKSERIDREKLKRSSSPRGEAQKLLELKMEAEKITRTASKSSGGDTEHPEPSLPLSRSRRRNVRSVYATMTDHESRSPAKEPVEQPRVTRKRLERELQEAVVPPTTPRRGRPPKTRRRAEEDGEHERKEPAETPRPAEGWRSPRSQKSAAAAGPQGKRGRNEQKVEAAAEAGAQASTREGNPKSRGEREAASEPKRDRRDPSTDKSGPDTFPVEVLERKPPEKTYKSKRGRARSTRSGMDRAAHQRSLEMAARAAGQAADKEAGPAAASPQESESPQKGSGSSPQLANNPADPDREAEEESASASTAPPEGTQLARQIELEQAVQNIAKLPEPSAAAASKGTATATATAASEEPAPEHGHKPAHQASETELAAAIGSIISDASGEPENFSAPPSVPPGSQTHPREGMEPGLHEAESGILETGTATESSAPQVSALDPPEGSADTKETRGNSGDSVQEAKGSKAEVTPPRKDKGRQKTTRRRKRNANKKVVAITETRASEAEQTQSESPAAEEATAATPEAPQEEKPSEKPPSPPAECTFDPSKTPPAESLSQENSAAEKTPCKAPVLPALPPLSQPALMDDGPQARFKVHSIIESDPVTPPSDSGIPPPTIPLVTIAKLPPPVIPGGVPHQSPPPKVTEWITRQEEPRAQSTPSPALPPDTKASDMDTSSSTLRKILMDPKYVSATGVTSTSVTTAIAEPVSAPCLQEAPAPPCDPKHPPLEGVSAAAVPNADTQASEVPVAADKEKVAPVIAPKITSVISRMPVSIDLENSQKITLAKPAPQTLTGLVSALTGLVNVSLVPVNALKGPVKGSVATLKGLVSTPAGPVNLLKGPVNVLTGPVNVLTTPVSATVGTVNAAPGPVTAACGVTATTGTAAVTGAVTAPAAKGKQRASSNENSRFHPGSMSVIDDRPADTGSGAGLRVNTSEGVVLLSYSGQKTEGPQRISAKISQIPPASAMDIEFQQSVSKSQVKADSITPTQSAPKGPQTPSAFANVAAHSTLVLTAQTYNASPVISSVKTDRPSLEKPEPIHLSVSTPVTQGGTVKVLTQGINTPPVLVHNQLVLTPSIVTTNKKLADPVTLKIETKVLQPANLGPTLTPHHPPALPSKLPAEVNHVPSGPSTPADRTIAHLATPKPDTHSPRPTGPTPGLFPRPCHPSSTTSTALSTNATVMLAAGIPVPQFISSIHPEQSVIMPPHSITQTVSLGHLSQGEVRMSTPTLPSITYSIRPETLHSPRAPLQPQQIEARAPQRVGTPQPATTGVPALATQHPPEEEVHYHLPVARAAAPVQSEVLVMQSEYRLHPYTVPRDVRIMVHPHVTAVSEQPRATEGVVKVPPANKAPQQLVKEAVKTSDAKAVPAPAPVPVPVPVPTPAPPPHGEARILTVTPSSQLQGLPLTPPVVVTHGVQIVHSSGELFQEYRYGDVRTYHAPAQQLTHTQFPVASSISLASRTKTSAQVPPEGEPLQSTQSAQPAPSTQATQPIPPAPPCQPSQLSQPAQPPSGKIPQVSQEAKGTQTGGVEQTRLPAIPTNRPSEPHAQLQRAPVETAQPAHPSPVSVSMKPDLPSPLSSQAAPKQPLFVPANSGPSTPPGLALPHAEVQPAPKQESSPHGTPQRPVDMVQLLKKYPIVWQGLLALKNDTAAVQLHFVSGNNVLAHRSLPLSEGGPPLRIAQRMRLEASQLEGVARRMTVETDYCLLLALPCGRDQEDVVSQTESLKAAFITYLQAKQAAGIINVPNPGSNQPAYVLQIFPPCEFSESHLSRLAPDLLASISNISPHLMIVIASV</sequence>
<proteinExistence type="evidence at protein level"/>
<organism>
    <name type="scientific">Mus musculus</name>
    <name type="common">Mouse</name>
    <dbReference type="NCBI Taxonomy" id="10090"/>
    <lineage>
        <taxon>Eukaryota</taxon>
        <taxon>Metazoa</taxon>
        <taxon>Chordata</taxon>
        <taxon>Craniata</taxon>
        <taxon>Vertebrata</taxon>
        <taxon>Euteleostomi</taxon>
        <taxon>Mammalia</taxon>
        <taxon>Eutheria</taxon>
        <taxon>Euarchontoglires</taxon>
        <taxon>Glires</taxon>
        <taxon>Rodentia</taxon>
        <taxon>Myomorpha</taxon>
        <taxon>Muroidea</taxon>
        <taxon>Muridae</taxon>
        <taxon>Murinae</taxon>
        <taxon>Mus</taxon>
        <taxon>Mus</taxon>
    </lineage>
</organism>
<keyword id="KW-0010">Activator</keyword>
<keyword id="KW-0025">Alternative splicing</keyword>
<keyword id="KW-0175">Coiled coil</keyword>
<keyword id="KW-0238">DNA-binding</keyword>
<keyword id="KW-0488">Methylation</keyword>
<keyword id="KW-0914">Notch signaling pathway</keyword>
<keyword id="KW-0539">Nucleus</keyword>
<keyword id="KW-0597">Phosphoprotein</keyword>
<keyword id="KW-1185">Reference proteome</keyword>
<keyword id="KW-0677">Repeat</keyword>
<keyword id="KW-0678">Repressor</keyword>
<keyword id="KW-0694">RNA-binding</keyword>
<keyword id="KW-0804">Transcription</keyword>
<keyword id="KW-0805">Transcription regulation</keyword>
<comment type="function">
    <text evidence="7 9 10 11">May serve as a nuclear matrix platform that organizes and integrates transcriptional responses. In osteoblasts, supports transcription activation: synergizes with RUNX2 to enhance FGFR2-mediated activation of the osteocalcin FGF-responsive element (OCFRE). Has also been shown to be an essential corepressor protein, which probably regulates different key pathways, such as the Notch pathway. Negative regulator of the Notch pathway via its interaction with RBPSUH, which prevents the association between NOTCH1 and RBPSUH, and therefore suppresses the transactivation activity of Notch signaling. Blocks the differentiation of precursor B-cells into marginal zone B-cells. Probably represses transcription via the recruitment of large complexes containing histone deacetylase proteins. May bind both to DNA and RNA.</text>
</comment>
<comment type="subunit">
    <text evidence="1 7 11">Interacts with NCOR2, HDAC1, HDAC2, RBBP4, MBD3 and MTA1L1. Interacts with the nuclear receptors RAR and PPARD. Interacts with RAR in absence of ligand. Binds to the steroid receptor RNA coactivator SRA (By similarity). Interacts with MSX2. Interacts with RBPSUH; this interaction may prevent the interaction between RBPSUH and NOTCH1. Binds to HIPK3.</text>
</comment>
<comment type="subcellular location">
    <subcellularLocation>
        <location evidence="7 10">Nucleus</location>
    </subcellularLocation>
    <text>Associates with chromatin.</text>
</comment>
<comment type="alternative products">
    <event type="alternative splicing"/>
    <isoform>
        <id>Q62504-1</id>
        <name>1</name>
        <sequence type="displayed"/>
    </isoform>
    <isoform>
        <id>Q62504-2</id>
        <name>2</name>
        <sequence type="described" ref="VSP_008564"/>
    </isoform>
    <isoform>
        <id>Q62504-3</id>
        <name>3</name>
        <sequence type="described" ref="VSP_013802 VSP_013803 VSP_013804"/>
    </isoform>
</comment>
<comment type="tissue specificity">
    <text evidence="7 8 9">Highly expressed in testis. Expressed at lower level in brain, lung, spleen, liver and kidney. Weakly expressed in cardiac and skeletal muscles and ovary. In spleen, it is expressed in follicular B-cells, while it is weakly expressed in marginal zone B-cells.</text>
</comment>
<comment type="domain">
    <text>The RID domain mediates the interaction with nuclear receptors.</text>
</comment>
<comment type="domain">
    <text evidence="1">The SPOC domain, which mediates the interaction with NCOR2, is essential for the repressive activity.</text>
</comment>
<comment type="similarity">
    <text evidence="16">Belongs to the RRM Spen family.</text>
</comment>
<comment type="sequence caution" evidence="16">
    <conflict type="erroneous initiation">
        <sequence resource="EMBL-CDS" id="AAD55931"/>
    </conflict>
</comment>
<comment type="sequence caution" evidence="16">
    <conflict type="erroneous termination">
        <sequence resource="EMBL-CDS" id="CAB01562"/>
    </conflict>
    <text>Truncated C-terminus.</text>
</comment>
<comment type="sequence caution" evidence="16">
    <conflict type="frameshift">
        <sequence resource="EMBL-CDS" id="CAB01562"/>
    </conflict>
</comment>
<dbReference type="EMBL" id="BY726481">
    <property type="status" value="NOT_ANNOTATED_CDS"/>
    <property type="molecule type" value="mRNA"/>
</dbReference>
<dbReference type="EMBL" id="AF156529">
    <property type="protein sequence ID" value="AAD55931.1"/>
    <property type="status" value="ALT_INIT"/>
    <property type="molecule type" value="mRNA"/>
</dbReference>
<dbReference type="EMBL" id="AB055980">
    <property type="protein sequence ID" value="BAB32786.1"/>
    <property type="molecule type" value="mRNA"/>
</dbReference>
<dbReference type="EMBL" id="Z78160">
    <property type="protein sequence ID" value="CAB01562.1"/>
    <property type="status" value="ALT_SEQ"/>
    <property type="molecule type" value="mRNA"/>
</dbReference>
<dbReference type="EMBL" id="AK122402">
    <property type="protein sequence ID" value="BAC65684.3"/>
    <property type="molecule type" value="Transcribed_RNA"/>
</dbReference>
<dbReference type="RefSeq" id="NP_062737.2">
    <property type="nucleotide sequence ID" value="NM_019763.2"/>
</dbReference>
<dbReference type="BMRB" id="Q62504"/>
<dbReference type="SMR" id="Q62504"/>
<dbReference type="BioGRID" id="207942">
    <property type="interactions" value="35"/>
</dbReference>
<dbReference type="CORUM" id="Q62504"/>
<dbReference type="FunCoup" id="Q62504">
    <property type="interactions" value="2444"/>
</dbReference>
<dbReference type="IntAct" id="Q62504">
    <property type="interactions" value="3"/>
</dbReference>
<dbReference type="STRING" id="10090.ENSMUSP00000101412"/>
<dbReference type="GlyGen" id="Q62504">
    <property type="glycosylation" value="20 sites, 2 N-linked glycans (2 sites), 1 O-linked glycan (13 sites)"/>
</dbReference>
<dbReference type="iPTMnet" id="Q62504"/>
<dbReference type="PhosphoSitePlus" id="Q62504"/>
<dbReference type="jPOST" id="Q62504"/>
<dbReference type="PaxDb" id="10090-ENSMUSP00000101412"/>
<dbReference type="PeptideAtlas" id="Q62504"/>
<dbReference type="ProteomicsDB" id="295607">
    <molecule id="Q62504-1"/>
</dbReference>
<dbReference type="ProteomicsDB" id="295608">
    <molecule id="Q62504-2"/>
</dbReference>
<dbReference type="ProteomicsDB" id="295609">
    <molecule id="Q62504-3"/>
</dbReference>
<dbReference type="Pumba" id="Q62504"/>
<dbReference type="DNASU" id="56381"/>
<dbReference type="GeneID" id="56381"/>
<dbReference type="KEGG" id="mmu:56381"/>
<dbReference type="AGR" id="MGI:1891706"/>
<dbReference type="CTD" id="23013"/>
<dbReference type="MGI" id="MGI:1891706">
    <property type="gene designation" value="Spen"/>
</dbReference>
<dbReference type="eggNOG" id="KOG0112">
    <property type="taxonomic scope" value="Eukaryota"/>
</dbReference>
<dbReference type="InParanoid" id="Q62504"/>
<dbReference type="OrthoDB" id="6407164at2759"/>
<dbReference type="PhylomeDB" id="Q62504"/>
<dbReference type="Reactome" id="R-MMU-9013422">
    <property type="pathway name" value="RHOBTB1 GTPase cycle"/>
</dbReference>
<dbReference type="BioGRID-ORCS" id="56381">
    <property type="hits" value="10 hits in 81 CRISPR screens"/>
</dbReference>
<dbReference type="ChiTaRS" id="Spen">
    <property type="organism name" value="mouse"/>
</dbReference>
<dbReference type="PRO" id="PR:Q62504"/>
<dbReference type="Proteomes" id="UP000000589">
    <property type="component" value="Unplaced"/>
</dbReference>
<dbReference type="RNAct" id="Q62504">
    <property type="molecule type" value="protein"/>
</dbReference>
<dbReference type="GO" id="GO:0005634">
    <property type="term" value="C:nucleus"/>
    <property type="evidence" value="ECO:0000314"/>
    <property type="project" value="MGI"/>
</dbReference>
<dbReference type="GO" id="GO:0003700">
    <property type="term" value="F:DNA-binding transcription factor activity"/>
    <property type="evidence" value="ECO:0000314"/>
    <property type="project" value="MGI"/>
</dbReference>
<dbReference type="GO" id="GO:0003723">
    <property type="term" value="F:RNA binding"/>
    <property type="evidence" value="ECO:0007669"/>
    <property type="project" value="UniProtKB-KW"/>
</dbReference>
<dbReference type="GO" id="GO:0003697">
    <property type="term" value="F:single-stranded DNA binding"/>
    <property type="evidence" value="ECO:0000314"/>
    <property type="project" value="MGI"/>
</dbReference>
<dbReference type="GO" id="GO:0003714">
    <property type="term" value="F:transcription corepressor activity"/>
    <property type="evidence" value="ECO:0000314"/>
    <property type="project" value="MGI"/>
</dbReference>
<dbReference type="GO" id="GO:0045892">
    <property type="term" value="P:negative regulation of DNA-templated transcription"/>
    <property type="evidence" value="ECO:0000314"/>
    <property type="project" value="MGI"/>
</dbReference>
<dbReference type="GO" id="GO:0007219">
    <property type="term" value="P:Notch signaling pathway"/>
    <property type="evidence" value="ECO:0007669"/>
    <property type="project" value="UniProtKB-KW"/>
</dbReference>
<dbReference type="GO" id="GO:0045893">
    <property type="term" value="P:positive regulation of DNA-templated transcription"/>
    <property type="evidence" value="ECO:0000314"/>
    <property type="project" value="MGI"/>
</dbReference>
<dbReference type="GO" id="GO:0060816">
    <property type="term" value="P:random inactivation of X chromosome"/>
    <property type="evidence" value="ECO:0000315"/>
    <property type="project" value="FlyBase"/>
</dbReference>
<dbReference type="CDD" id="cd12348">
    <property type="entry name" value="RRM1_SHARP"/>
    <property type="match status" value="1"/>
</dbReference>
<dbReference type="CDD" id="cd12349">
    <property type="entry name" value="RRM2_SHARP"/>
    <property type="match status" value="1"/>
</dbReference>
<dbReference type="CDD" id="cd12350">
    <property type="entry name" value="RRM3_SHARP"/>
    <property type="match status" value="1"/>
</dbReference>
<dbReference type="CDD" id="cd12351">
    <property type="entry name" value="RRM4_SHARP"/>
    <property type="match status" value="1"/>
</dbReference>
<dbReference type="CDD" id="cd21543">
    <property type="entry name" value="SPOC_SHARP"/>
    <property type="match status" value="1"/>
</dbReference>
<dbReference type="FunFam" id="3.30.70.330:FF:000088">
    <property type="entry name" value="msx2-interacting protein-like isoform X1"/>
    <property type="match status" value="1"/>
</dbReference>
<dbReference type="FunFam" id="3.30.70.330:FF:000118">
    <property type="entry name" value="msx2-interacting protein-like isoform X1"/>
    <property type="match status" value="1"/>
</dbReference>
<dbReference type="FunFam" id="3.30.70.330:FF:000143">
    <property type="entry name" value="msx2-interacting protein-like isoform X1"/>
    <property type="match status" value="1"/>
</dbReference>
<dbReference type="FunFam" id="3.30.70.330:FF:000150">
    <property type="entry name" value="msx2-interacting protein-like isoform X1"/>
    <property type="match status" value="1"/>
</dbReference>
<dbReference type="FunFam" id="2.40.290.10:FF:000002">
    <property type="entry name" value="Spen family transcriptional repressor"/>
    <property type="match status" value="1"/>
</dbReference>
<dbReference type="Gene3D" id="2.40.290.10">
    <property type="match status" value="1"/>
</dbReference>
<dbReference type="Gene3D" id="3.30.70.330">
    <property type="match status" value="4"/>
</dbReference>
<dbReference type="InterPro" id="IPR049095">
    <property type="entry name" value="MINT_MID"/>
</dbReference>
<dbReference type="InterPro" id="IPR049094">
    <property type="entry name" value="MINT_RAM7"/>
</dbReference>
<dbReference type="InterPro" id="IPR049093">
    <property type="entry name" value="MINT_RID"/>
</dbReference>
<dbReference type="InterPro" id="IPR012677">
    <property type="entry name" value="Nucleotide-bd_a/b_plait_sf"/>
</dbReference>
<dbReference type="InterPro" id="IPR035979">
    <property type="entry name" value="RBD_domain_sf"/>
</dbReference>
<dbReference type="InterPro" id="IPR000504">
    <property type="entry name" value="RRM_dom"/>
</dbReference>
<dbReference type="InterPro" id="IPR034172">
    <property type="entry name" value="SHARP_RRM1"/>
</dbReference>
<dbReference type="InterPro" id="IPR034173">
    <property type="entry name" value="SHARP_RRM2"/>
</dbReference>
<dbReference type="InterPro" id="IPR034174">
    <property type="entry name" value="SHARP_RRM3"/>
</dbReference>
<dbReference type="InterPro" id="IPR034175">
    <property type="entry name" value="SHARP_RRM4"/>
</dbReference>
<dbReference type="InterPro" id="IPR016194">
    <property type="entry name" value="SPOC-like_C_dom_sf"/>
</dbReference>
<dbReference type="InterPro" id="IPR012921">
    <property type="entry name" value="SPOC_C"/>
</dbReference>
<dbReference type="InterPro" id="IPR010912">
    <property type="entry name" value="SPOC_met"/>
</dbReference>
<dbReference type="PANTHER" id="PTHR23189">
    <property type="entry name" value="RNA RECOGNITION MOTIF-CONTAINING"/>
    <property type="match status" value="1"/>
</dbReference>
<dbReference type="Pfam" id="PF20809">
    <property type="entry name" value="MINT_MID"/>
    <property type="match status" value="1"/>
</dbReference>
<dbReference type="Pfam" id="PF20808">
    <property type="entry name" value="MINT_RAM7"/>
    <property type="match status" value="1"/>
</dbReference>
<dbReference type="Pfam" id="PF20810">
    <property type="entry name" value="MINT_RID"/>
    <property type="match status" value="1"/>
</dbReference>
<dbReference type="Pfam" id="PF00076">
    <property type="entry name" value="RRM_1"/>
    <property type="match status" value="3"/>
</dbReference>
<dbReference type="Pfam" id="PF07744">
    <property type="entry name" value="SPOC"/>
    <property type="match status" value="1"/>
</dbReference>
<dbReference type="SMART" id="SM00360">
    <property type="entry name" value="RRM"/>
    <property type="match status" value="4"/>
</dbReference>
<dbReference type="SUPFAM" id="SSF54928">
    <property type="entry name" value="RNA-binding domain, RBD"/>
    <property type="match status" value="2"/>
</dbReference>
<dbReference type="SUPFAM" id="SSF100939">
    <property type="entry name" value="SPOC domain-like"/>
    <property type="match status" value="1"/>
</dbReference>
<dbReference type="PROSITE" id="PS50102">
    <property type="entry name" value="RRM"/>
    <property type="match status" value="4"/>
</dbReference>
<dbReference type="PROSITE" id="PS50917">
    <property type="entry name" value="SPOC"/>
    <property type="match status" value="1"/>
</dbReference>